<organism>
    <name type="scientific">Escherichia coli O17:K52:H18 (strain UMN026 / ExPEC)</name>
    <dbReference type="NCBI Taxonomy" id="585056"/>
    <lineage>
        <taxon>Bacteria</taxon>
        <taxon>Pseudomonadati</taxon>
        <taxon>Pseudomonadota</taxon>
        <taxon>Gammaproteobacteria</taxon>
        <taxon>Enterobacterales</taxon>
        <taxon>Enterobacteriaceae</taxon>
        <taxon>Escherichia</taxon>
    </lineage>
</organism>
<dbReference type="EC" id="1.3.3.3" evidence="1"/>
<dbReference type="EMBL" id="CU928163">
    <property type="protein sequence ID" value="CAR13935.1"/>
    <property type="molecule type" value="Genomic_DNA"/>
</dbReference>
<dbReference type="RefSeq" id="WP_001309639.1">
    <property type="nucleotide sequence ID" value="NC_011751.1"/>
</dbReference>
<dbReference type="RefSeq" id="YP_002413462.1">
    <property type="nucleotide sequence ID" value="NC_011751.1"/>
</dbReference>
<dbReference type="SMR" id="B7N626"/>
<dbReference type="STRING" id="585056.ECUMN_2757"/>
<dbReference type="KEGG" id="eum:ECUMN_2757"/>
<dbReference type="PATRIC" id="fig|585056.7.peg.2938"/>
<dbReference type="HOGENOM" id="CLU_026169_0_1_6"/>
<dbReference type="UniPathway" id="UPA00251">
    <property type="reaction ID" value="UER00322"/>
</dbReference>
<dbReference type="Proteomes" id="UP000007097">
    <property type="component" value="Chromosome"/>
</dbReference>
<dbReference type="GO" id="GO:0005737">
    <property type="term" value="C:cytoplasm"/>
    <property type="evidence" value="ECO:0007669"/>
    <property type="project" value="UniProtKB-SubCell"/>
</dbReference>
<dbReference type="GO" id="GO:0004109">
    <property type="term" value="F:coproporphyrinogen oxidase activity"/>
    <property type="evidence" value="ECO:0007669"/>
    <property type="project" value="UniProtKB-UniRule"/>
</dbReference>
<dbReference type="GO" id="GO:0030145">
    <property type="term" value="F:manganese ion binding"/>
    <property type="evidence" value="ECO:0007669"/>
    <property type="project" value="UniProtKB-UniRule"/>
</dbReference>
<dbReference type="GO" id="GO:0042803">
    <property type="term" value="F:protein homodimerization activity"/>
    <property type="evidence" value="ECO:0000250"/>
    <property type="project" value="UniProtKB"/>
</dbReference>
<dbReference type="GO" id="GO:0006782">
    <property type="term" value="P:protoporphyrinogen IX biosynthetic process"/>
    <property type="evidence" value="ECO:0007669"/>
    <property type="project" value="UniProtKB-UniRule"/>
</dbReference>
<dbReference type="FunFam" id="3.40.1500.10:FF:000001">
    <property type="entry name" value="Oxygen-dependent coproporphyrinogen-III oxidase"/>
    <property type="match status" value="1"/>
</dbReference>
<dbReference type="Gene3D" id="3.40.1500.10">
    <property type="entry name" value="Coproporphyrinogen III oxidase, aerobic"/>
    <property type="match status" value="1"/>
</dbReference>
<dbReference type="HAMAP" id="MF_00333">
    <property type="entry name" value="Coprogen_oxidas"/>
    <property type="match status" value="1"/>
</dbReference>
<dbReference type="InterPro" id="IPR001260">
    <property type="entry name" value="Coprogen_oxidase_aer"/>
</dbReference>
<dbReference type="InterPro" id="IPR036406">
    <property type="entry name" value="Coprogen_oxidase_aer_sf"/>
</dbReference>
<dbReference type="InterPro" id="IPR018375">
    <property type="entry name" value="Coprogen_oxidase_CS"/>
</dbReference>
<dbReference type="NCBIfam" id="NF003727">
    <property type="entry name" value="PRK05330.1"/>
    <property type="match status" value="1"/>
</dbReference>
<dbReference type="PANTHER" id="PTHR10755">
    <property type="entry name" value="COPROPORPHYRINOGEN III OXIDASE, MITOCHONDRIAL"/>
    <property type="match status" value="1"/>
</dbReference>
<dbReference type="PANTHER" id="PTHR10755:SF0">
    <property type="entry name" value="OXYGEN-DEPENDENT COPROPORPHYRINOGEN-III OXIDASE, MITOCHONDRIAL"/>
    <property type="match status" value="1"/>
</dbReference>
<dbReference type="Pfam" id="PF01218">
    <property type="entry name" value="Coprogen_oxidas"/>
    <property type="match status" value="1"/>
</dbReference>
<dbReference type="PIRSF" id="PIRSF000166">
    <property type="entry name" value="Coproporphyri_ox"/>
    <property type="match status" value="1"/>
</dbReference>
<dbReference type="PRINTS" id="PR00073">
    <property type="entry name" value="COPRGNOXDASE"/>
</dbReference>
<dbReference type="SUPFAM" id="SSF102886">
    <property type="entry name" value="Coproporphyrinogen III oxidase"/>
    <property type="match status" value="1"/>
</dbReference>
<dbReference type="PROSITE" id="PS01021">
    <property type="entry name" value="COPROGEN_OXIDASE"/>
    <property type="match status" value="1"/>
</dbReference>
<name>HEM6_ECOLU</name>
<sequence>MKPDAHQVKQFLLNLQDTICQQLSAVDGAEFVEDSWQREAGGGGRSRVLRNGGVFEQAGVNFSHVHGEAMPASATAHRPELAGRSFEAMGISLVVHPHNPYVPTSHANVRFFIAEKPGAEPVWWFGGGFDLTPFYGFEEDAIHWHRTARDLCQPFGEDVYPRYKKWCDEYFYLKHRNEQRGIGGLFFDDLNTPDFDHCFAFMQAVGKGYTNAYLPIVERRKAMAYGERERNFQLYRRGRYVEFNLVWDRGTLFGLQTGGRTESILMSMPPLVRWEYDYHPEDGSPEAALSEFIKVRDWV</sequence>
<proteinExistence type="inferred from homology"/>
<feature type="chain" id="PRO_1000119800" description="Oxygen-dependent coproporphyrinogen-III oxidase">
    <location>
        <begin position="1"/>
        <end position="299"/>
    </location>
</feature>
<feature type="region of interest" description="Important for dimerization" evidence="1">
    <location>
        <begin position="240"/>
        <end position="275"/>
    </location>
</feature>
<feature type="active site" description="Proton donor" evidence="1">
    <location>
        <position position="106"/>
    </location>
</feature>
<feature type="binding site" evidence="1">
    <location>
        <position position="92"/>
    </location>
    <ligand>
        <name>substrate</name>
    </ligand>
</feature>
<feature type="binding site" evidence="1">
    <location>
        <position position="96"/>
    </location>
    <ligand>
        <name>Mn(2+)</name>
        <dbReference type="ChEBI" id="CHEBI:29035"/>
    </ligand>
</feature>
<feature type="binding site" evidence="1">
    <location>
        <position position="106"/>
    </location>
    <ligand>
        <name>Mn(2+)</name>
        <dbReference type="ChEBI" id="CHEBI:29035"/>
    </ligand>
</feature>
<feature type="binding site" evidence="1">
    <location>
        <begin position="108"/>
        <end position="110"/>
    </location>
    <ligand>
        <name>substrate</name>
    </ligand>
</feature>
<feature type="binding site" evidence="1">
    <location>
        <position position="145"/>
    </location>
    <ligand>
        <name>Mn(2+)</name>
        <dbReference type="ChEBI" id="CHEBI:29035"/>
    </ligand>
</feature>
<feature type="binding site" evidence="1">
    <location>
        <position position="175"/>
    </location>
    <ligand>
        <name>Mn(2+)</name>
        <dbReference type="ChEBI" id="CHEBI:29035"/>
    </ligand>
</feature>
<feature type="binding site" evidence="1">
    <location>
        <begin position="258"/>
        <end position="260"/>
    </location>
    <ligand>
        <name>substrate</name>
    </ligand>
</feature>
<feature type="site" description="Important for dimerization" evidence="1">
    <location>
        <position position="175"/>
    </location>
</feature>
<protein>
    <recommendedName>
        <fullName evidence="1">Oxygen-dependent coproporphyrinogen-III oxidase</fullName>
        <shortName evidence="1">CPO</shortName>
        <shortName evidence="1">Coprogen oxidase</shortName>
        <shortName evidence="1">Coproporphyrinogenase</shortName>
        <ecNumber evidence="1">1.3.3.3</ecNumber>
    </recommendedName>
</protein>
<gene>
    <name evidence="1" type="primary">hemF</name>
    <name type="ordered locus">ECUMN_2757</name>
</gene>
<reference key="1">
    <citation type="journal article" date="2009" name="PLoS Genet.">
        <title>Organised genome dynamics in the Escherichia coli species results in highly diverse adaptive paths.</title>
        <authorList>
            <person name="Touchon M."/>
            <person name="Hoede C."/>
            <person name="Tenaillon O."/>
            <person name="Barbe V."/>
            <person name="Baeriswyl S."/>
            <person name="Bidet P."/>
            <person name="Bingen E."/>
            <person name="Bonacorsi S."/>
            <person name="Bouchier C."/>
            <person name="Bouvet O."/>
            <person name="Calteau A."/>
            <person name="Chiapello H."/>
            <person name="Clermont O."/>
            <person name="Cruveiller S."/>
            <person name="Danchin A."/>
            <person name="Diard M."/>
            <person name="Dossat C."/>
            <person name="Karoui M.E."/>
            <person name="Frapy E."/>
            <person name="Garry L."/>
            <person name="Ghigo J.M."/>
            <person name="Gilles A.M."/>
            <person name="Johnson J."/>
            <person name="Le Bouguenec C."/>
            <person name="Lescat M."/>
            <person name="Mangenot S."/>
            <person name="Martinez-Jehanne V."/>
            <person name="Matic I."/>
            <person name="Nassif X."/>
            <person name="Oztas S."/>
            <person name="Petit M.A."/>
            <person name="Pichon C."/>
            <person name="Rouy Z."/>
            <person name="Ruf C.S."/>
            <person name="Schneider D."/>
            <person name="Tourret J."/>
            <person name="Vacherie B."/>
            <person name="Vallenet D."/>
            <person name="Medigue C."/>
            <person name="Rocha E.P.C."/>
            <person name="Denamur E."/>
        </authorList>
    </citation>
    <scope>NUCLEOTIDE SEQUENCE [LARGE SCALE GENOMIC DNA]</scope>
    <source>
        <strain>UMN026 / ExPEC</strain>
    </source>
</reference>
<accession>B7N626</accession>
<evidence type="ECO:0000255" key="1">
    <source>
        <dbReference type="HAMAP-Rule" id="MF_00333"/>
    </source>
</evidence>
<keyword id="KW-0963">Cytoplasm</keyword>
<keyword id="KW-0350">Heme biosynthesis</keyword>
<keyword id="KW-0464">Manganese</keyword>
<keyword id="KW-0479">Metal-binding</keyword>
<keyword id="KW-0560">Oxidoreductase</keyword>
<keyword id="KW-0627">Porphyrin biosynthesis</keyword>
<comment type="function">
    <text evidence="1">Involved in the heme biosynthesis. Catalyzes the aerobic oxidative decarboxylation of propionate groups of rings A and B of coproporphyrinogen-III to yield the vinyl groups in protoporphyrinogen-IX.</text>
</comment>
<comment type="catalytic activity">
    <reaction evidence="1">
        <text>coproporphyrinogen III + O2 + 2 H(+) = protoporphyrinogen IX + 2 CO2 + 2 H2O</text>
        <dbReference type="Rhea" id="RHEA:18257"/>
        <dbReference type="ChEBI" id="CHEBI:15377"/>
        <dbReference type="ChEBI" id="CHEBI:15378"/>
        <dbReference type="ChEBI" id="CHEBI:15379"/>
        <dbReference type="ChEBI" id="CHEBI:16526"/>
        <dbReference type="ChEBI" id="CHEBI:57307"/>
        <dbReference type="ChEBI" id="CHEBI:57309"/>
        <dbReference type="EC" id="1.3.3.3"/>
    </reaction>
</comment>
<comment type="cofactor">
    <cofactor evidence="1">
        <name>Mn(2+)</name>
        <dbReference type="ChEBI" id="CHEBI:29035"/>
    </cofactor>
</comment>
<comment type="pathway">
    <text evidence="1">Porphyrin-containing compound metabolism; protoporphyrin-IX biosynthesis; protoporphyrinogen-IX from coproporphyrinogen-III (O2 route): step 1/1.</text>
</comment>
<comment type="subunit">
    <text evidence="1">Homodimer.</text>
</comment>
<comment type="subcellular location">
    <subcellularLocation>
        <location evidence="1">Cytoplasm</location>
    </subcellularLocation>
</comment>
<comment type="similarity">
    <text evidence="1">Belongs to the aerobic coproporphyrinogen-III oxidase family.</text>
</comment>